<protein>
    <recommendedName>
        <fullName>Histone H3.3</fullName>
    </recommendedName>
</protein>
<name>H33_VITVI</name>
<evidence type="ECO:0000250" key="1"/>
<evidence type="ECO:0000256" key="2">
    <source>
        <dbReference type="SAM" id="MobiDB-lite"/>
    </source>
</evidence>
<evidence type="ECO:0000305" key="3"/>
<dbReference type="EMBL" id="AF501624">
    <property type="protein sequence ID" value="AAP30739.1"/>
    <property type="molecule type" value="mRNA"/>
</dbReference>
<dbReference type="RefSeq" id="NP_001268032.1">
    <property type="nucleotide sequence ID" value="NM_001281103.1"/>
</dbReference>
<dbReference type="RefSeq" id="XP_002270349.1">
    <property type="nucleotide sequence ID" value="XM_002270313.5"/>
</dbReference>
<dbReference type="RefSeq" id="XP_002278809.1">
    <property type="nucleotide sequence ID" value="XM_002278773.4"/>
</dbReference>
<dbReference type="RefSeq" id="XP_002278833.1">
    <property type="nucleotide sequence ID" value="XM_002278797.3"/>
</dbReference>
<dbReference type="RefSeq" id="XP_003635681.1">
    <property type="nucleotide sequence ID" value="XM_003635633.3"/>
</dbReference>
<dbReference type="RefSeq" id="XP_019074729.1">
    <property type="nucleotide sequence ID" value="XM_019219184.1"/>
</dbReference>
<dbReference type="SMR" id="Q71H73"/>
<dbReference type="PaxDb" id="29760-VIT_00s2837g00010.t01"/>
<dbReference type="EnsemblPlants" id="Vitvi04g04384_t001">
    <property type="protein sequence ID" value="Vitvi04g04384_P001"/>
    <property type="gene ID" value="Vitvi04g04384"/>
</dbReference>
<dbReference type="EnsemblPlants" id="Vitvi18g04248_t001">
    <property type="protein sequence ID" value="Vitvi18g04248_P001"/>
    <property type="gene ID" value="Vitvi18g04248"/>
</dbReference>
<dbReference type="EnsemblPlants" id="Vitvi18g04248_t002">
    <property type="protein sequence ID" value="Vitvi18g04248_P002"/>
    <property type="gene ID" value="Vitvi18g04248"/>
</dbReference>
<dbReference type="GeneID" id="100248958"/>
<dbReference type="GeneID" id="100257369"/>
<dbReference type="GeneID" id="100265845"/>
<dbReference type="Gramene" id="Vitvi04g04384_t001">
    <property type="protein sequence ID" value="Vitvi04g04384_P001"/>
    <property type="gene ID" value="Vitvi04g04384"/>
</dbReference>
<dbReference type="Gramene" id="Vitvi18g04248_t001">
    <property type="protein sequence ID" value="Vitvi18g04248_P001"/>
    <property type="gene ID" value="Vitvi18g04248"/>
</dbReference>
<dbReference type="Gramene" id="Vitvi18g04248_t002">
    <property type="protein sequence ID" value="Vitvi18g04248_P002"/>
    <property type="gene ID" value="Vitvi18g04248"/>
</dbReference>
<dbReference type="KEGG" id="vvi:100248958"/>
<dbReference type="KEGG" id="vvi:100257369"/>
<dbReference type="KEGG" id="vvi:100265845"/>
<dbReference type="eggNOG" id="KOG1745">
    <property type="taxonomic scope" value="Eukaryota"/>
</dbReference>
<dbReference type="HOGENOM" id="CLU_078295_4_0_1"/>
<dbReference type="OrthoDB" id="1881399at2759"/>
<dbReference type="ExpressionAtlas" id="Q71H73">
    <property type="expression patterns" value="baseline and differential"/>
</dbReference>
<dbReference type="GO" id="GO:0000786">
    <property type="term" value="C:nucleosome"/>
    <property type="evidence" value="ECO:0007669"/>
    <property type="project" value="UniProtKB-KW"/>
</dbReference>
<dbReference type="GO" id="GO:0005634">
    <property type="term" value="C:nucleus"/>
    <property type="evidence" value="ECO:0007669"/>
    <property type="project" value="UniProtKB-SubCell"/>
</dbReference>
<dbReference type="GO" id="GO:0003677">
    <property type="term" value="F:DNA binding"/>
    <property type="evidence" value="ECO:0007669"/>
    <property type="project" value="UniProtKB-KW"/>
</dbReference>
<dbReference type="GO" id="GO:0046982">
    <property type="term" value="F:protein heterodimerization activity"/>
    <property type="evidence" value="ECO:0007669"/>
    <property type="project" value="InterPro"/>
</dbReference>
<dbReference type="GO" id="GO:0030527">
    <property type="term" value="F:structural constituent of chromatin"/>
    <property type="evidence" value="ECO:0007669"/>
    <property type="project" value="InterPro"/>
</dbReference>
<dbReference type="CDD" id="cd22911">
    <property type="entry name" value="HFD_H3"/>
    <property type="match status" value="1"/>
</dbReference>
<dbReference type="FunFam" id="1.10.20.10:FF:000078">
    <property type="entry name" value="Histone H3"/>
    <property type="match status" value="1"/>
</dbReference>
<dbReference type="FunFam" id="1.10.20.10:FF:000044">
    <property type="entry name" value="Histone H3.3"/>
    <property type="match status" value="1"/>
</dbReference>
<dbReference type="Gene3D" id="1.10.20.10">
    <property type="entry name" value="Histone, subunit A"/>
    <property type="match status" value="1"/>
</dbReference>
<dbReference type="InterPro" id="IPR009072">
    <property type="entry name" value="Histone-fold"/>
</dbReference>
<dbReference type="InterPro" id="IPR007125">
    <property type="entry name" value="Histone_H2A/H2B/H3"/>
</dbReference>
<dbReference type="InterPro" id="IPR000164">
    <property type="entry name" value="Histone_H3/CENP-A"/>
</dbReference>
<dbReference type="PANTHER" id="PTHR11426">
    <property type="entry name" value="HISTONE H3"/>
    <property type="match status" value="1"/>
</dbReference>
<dbReference type="Pfam" id="PF00125">
    <property type="entry name" value="Histone"/>
    <property type="match status" value="1"/>
</dbReference>
<dbReference type="PRINTS" id="PR00622">
    <property type="entry name" value="HISTONEH3"/>
</dbReference>
<dbReference type="SMART" id="SM00428">
    <property type="entry name" value="H3"/>
    <property type="match status" value="1"/>
</dbReference>
<dbReference type="SUPFAM" id="SSF47113">
    <property type="entry name" value="Histone-fold"/>
    <property type="match status" value="1"/>
</dbReference>
<dbReference type="PROSITE" id="PS00322">
    <property type="entry name" value="HISTONE_H3_1"/>
    <property type="match status" value="1"/>
</dbReference>
<dbReference type="PROSITE" id="PS00959">
    <property type="entry name" value="HISTONE_H3_2"/>
    <property type="match status" value="1"/>
</dbReference>
<feature type="initiator methionine" description="Removed" evidence="1">
    <location>
        <position position="1"/>
    </location>
</feature>
<feature type="chain" id="PRO_0000221294" description="Histone H3.3">
    <location>
        <begin position="2"/>
        <end position="136"/>
    </location>
</feature>
<feature type="region of interest" description="Disordered" evidence="2">
    <location>
        <begin position="1"/>
        <end position="43"/>
    </location>
</feature>
<feature type="modified residue" description="N6-methylated lysine" evidence="1">
    <location>
        <position position="5"/>
    </location>
</feature>
<feature type="modified residue" description="N6-acetyllysine; alternate" evidence="1">
    <location>
        <position position="10"/>
    </location>
</feature>
<feature type="modified residue" description="N6-methylated lysine; alternate" evidence="1">
    <location>
        <position position="10"/>
    </location>
</feature>
<feature type="modified residue" description="Phosphoserine" evidence="1">
    <location>
        <position position="11"/>
    </location>
</feature>
<feature type="modified residue" description="Phosphothreonine" evidence="1">
    <location>
        <position position="12"/>
    </location>
</feature>
<feature type="modified residue" description="N6-acetyllysine" evidence="1">
    <location>
        <position position="15"/>
    </location>
</feature>
<feature type="modified residue" description="N6-acetyllysine; alternate" evidence="1">
    <location>
        <position position="19"/>
    </location>
</feature>
<feature type="modified residue" description="N6-methylated lysine; alternate" evidence="1">
    <location>
        <position position="19"/>
    </location>
</feature>
<feature type="modified residue" description="N6-acetyllysine; alternate" evidence="1">
    <location>
        <position position="24"/>
    </location>
</feature>
<feature type="modified residue" description="N6-methylated lysine; alternate" evidence="1">
    <location>
        <position position="24"/>
    </location>
</feature>
<feature type="modified residue" description="N6-methylated lysine" evidence="1">
    <location>
        <position position="28"/>
    </location>
</feature>
<feature type="modified residue" description="Phosphoserine" evidence="1">
    <location>
        <position position="29"/>
    </location>
</feature>
<feature type="modified residue" description="N6-methylated lysine" evidence="1">
    <location>
        <position position="37"/>
    </location>
</feature>
<sequence>MARTKQTARKSTGGKAPRKQLATKAARKSAPTTGGVKKPHRYRPGTVALREIRKYQKSTELLIRKLPFQRLVREIAQDFKTDLRFQSHAVLALQEAAEAYLVGLFEDTNLCAIHAKRVTIMPKDIQLARRIRGERA</sequence>
<proteinExistence type="evidence at transcript level"/>
<comment type="function">
    <text>Variant histone H3 which replaces conventional H3 in a wide range of nucleosomes in active genes. Constitutes the predominant form of histone H3 in non-dividing cells and is incorporated into chromatin independently of DNA synthesis. Deposited at sites of nucleosomal displacement throughout transcribed genes, suggesting that it represents an epigenetic imprint of transcriptionally active chromatin. Nucleosomes wrap and compact DNA into chromatin, limiting DNA accessibility to the cellular machineries which require DNA as a template. Histones thereby play a central role in transcription regulation, DNA repair, DNA replication and chromosomal stability. DNA accessibility is regulated via a complex set of post-translational modifications of histones, also called histone code, and nucleosome remodeling.</text>
</comment>
<comment type="subunit">
    <text>The nucleosome is a histone octamer containing two molecules each of H2A, H2B, H3 and H4 assembled in one H3-H4 heterotetramer and two H2A-H2B heterodimers. The octamer wraps approximately 147 bp of DNA.</text>
</comment>
<comment type="subcellular location">
    <subcellularLocation>
        <location evidence="1">Nucleus</location>
    </subcellularLocation>
    <subcellularLocation>
        <location evidence="1">Chromosome</location>
    </subcellularLocation>
</comment>
<comment type="PTM">
    <text evidence="1">Acetylation is generally linked to gene activation. Can be acetylated to form H3K9ac, H3K14ac, H3K18ac and H3K23ac. H3K9ac could compete with H3K9me and prevent gene silencing. H3K9ac is restricted to euchromatin (By similarity).</text>
</comment>
<comment type="PTM">
    <text evidence="1">Methylated to form mainly H3K4me, H3K9me, H3K18me, H3K23me, H3K27me and H3K36me. H3K4me1/2/3, H3K9me3, H3K27me3 and H3K36me1/2/3 are typical marks for euchromatin, whereas heterochromatic chromocenters are enriched in H3K9me1/2 and H3K27me1/2. H2BK143ub1 is probably prerequisite for H3K4me (By similarity).</text>
</comment>
<comment type="PTM">
    <text evidence="1">Can be phosphorylated to form H3S10ph, H3T11ph and H3S28ph.</text>
</comment>
<comment type="similarity">
    <text evidence="3">Belongs to the histone H3 family.</text>
</comment>
<comment type="caution">
    <text evidence="3">To ensure consistency between histone entries, we follow the 'Brno' nomenclature for histone modifications, with positions referring to those used in the literature for the 'closest' model organism. Due to slight variations in histone sequences between organisms and to the presence of initiator methionine in UniProtKB/Swiss-Prot sequences, the actual positions of modified amino acids in the sequence generally differ. In this entry the following conventions are used: H3K4me = methylated Lys-5; H3K9ac = acetylated Lys-10; H3K9me = methylated Lys-10; H3S10ph = phosphorylated Ser-11; H3T11ph = phosphorylated Thr-12; H3K14ac = acetylated Lys-15; H3K18ac = acetylated Lys-19; H3K18me = methylated Lys-19; H3K23ac = acetylated Lys-24; H3K23me = methylated Lys-24; H3K27me = methylated Lys-28; H3S28ph = phosphorylated Ser-29; H3K36me = methylated Lys-37.</text>
</comment>
<keyword id="KW-0007">Acetylation</keyword>
<keyword id="KW-0158">Chromosome</keyword>
<keyword id="KW-0238">DNA-binding</keyword>
<keyword id="KW-0488">Methylation</keyword>
<keyword id="KW-0544">Nucleosome core</keyword>
<keyword id="KW-0539">Nucleus</keyword>
<keyword id="KW-0597">Phosphoprotein</keyword>
<reference key="1">
    <citation type="submission" date="2002-04" db="EMBL/GenBank/DDBJ databases">
        <authorList>
            <person name="Cakir B."/>
            <person name="Agasse A."/>
            <person name="Delrot S."/>
            <person name="Atanassova R."/>
        </authorList>
    </citation>
    <scope>NUCLEOTIDE SEQUENCE [MRNA]</scope>
</reference>
<accession>Q71H73</accession>
<organism>
    <name type="scientific">Vitis vinifera</name>
    <name type="common">Grape</name>
    <dbReference type="NCBI Taxonomy" id="29760"/>
    <lineage>
        <taxon>Eukaryota</taxon>
        <taxon>Viridiplantae</taxon>
        <taxon>Streptophyta</taxon>
        <taxon>Embryophyta</taxon>
        <taxon>Tracheophyta</taxon>
        <taxon>Spermatophyta</taxon>
        <taxon>Magnoliopsida</taxon>
        <taxon>eudicotyledons</taxon>
        <taxon>Gunneridae</taxon>
        <taxon>Pentapetalae</taxon>
        <taxon>rosids</taxon>
        <taxon>Vitales</taxon>
        <taxon>Vitaceae</taxon>
        <taxon>Viteae</taxon>
        <taxon>Vitis</taxon>
    </lineage>
</organism>